<dbReference type="EC" id="4.2.3.5" evidence="1"/>
<dbReference type="EMBL" id="CP000361">
    <property type="protein sequence ID" value="ABV67862.1"/>
    <property type="molecule type" value="Genomic_DNA"/>
</dbReference>
<dbReference type="RefSeq" id="WP_012147598.1">
    <property type="nucleotide sequence ID" value="NC_009850.1"/>
</dbReference>
<dbReference type="SMR" id="A8EV89"/>
<dbReference type="STRING" id="367737.Abu_1614"/>
<dbReference type="GeneID" id="24305090"/>
<dbReference type="KEGG" id="abu:Abu_1614"/>
<dbReference type="eggNOG" id="COG0082">
    <property type="taxonomic scope" value="Bacteria"/>
</dbReference>
<dbReference type="HOGENOM" id="CLU_034547_0_2_7"/>
<dbReference type="UniPathway" id="UPA00053">
    <property type="reaction ID" value="UER00090"/>
</dbReference>
<dbReference type="Proteomes" id="UP000001136">
    <property type="component" value="Chromosome"/>
</dbReference>
<dbReference type="GO" id="GO:0005829">
    <property type="term" value="C:cytosol"/>
    <property type="evidence" value="ECO:0007669"/>
    <property type="project" value="TreeGrafter"/>
</dbReference>
<dbReference type="GO" id="GO:0004107">
    <property type="term" value="F:chorismate synthase activity"/>
    <property type="evidence" value="ECO:0007669"/>
    <property type="project" value="UniProtKB-UniRule"/>
</dbReference>
<dbReference type="GO" id="GO:0010181">
    <property type="term" value="F:FMN binding"/>
    <property type="evidence" value="ECO:0007669"/>
    <property type="project" value="TreeGrafter"/>
</dbReference>
<dbReference type="GO" id="GO:0008652">
    <property type="term" value="P:amino acid biosynthetic process"/>
    <property type="evidence" value="ECO:0007669"/>
    <property type="project" value="UniProtKB-KW"/>
</dbReference>
<dbReference type="GO" id="GO:0009073">
    <property type="term" value="P:aromatic amino acid family biosynthetic process"/>
    <property type="evidence" value="ECO:0007669"/>
    <property type="project" value="UniProtKB-KW"/>
</dbReference>
<dbReference type="GO" id="GO:0009423">
    <property type="term" value="P:chorismate biosynthetic process"/>
    <property type="evidence" value="ECO:0007669"/>
    <property type="project" value="UniProtKB-UniRule"/>
</dbReference>
<dbReference type="CDD" id="cd07304">
    <property type="entry name" value="Chorismate_synthase"/>
    <property type="match status" value="1"/>
</dbReference>
<dbReference type="Gene3D" id="3.60.150.10">
    <property type="entry name" value="Chorismate synthase AroC"/>
    <property type="match status" value="1"/>
</dbReference>
<dbReference type="HAMAP" id="MF_00300">
    <property type="entry name" value="Chorismate_synth"/>
    <property type="match status" value="1"/>
</dbReference>
<dbReference type="InterPro" id="IPR000453">
    <property type="entry name" value="Chorismate_synth"/>
</dbReference>
<dbReference type="InterPro" id="IPR035904">
    <property type="entry name" value="Chorismate_synth_AroC_sf"/>
</dbReference>
<dbReference type="InterPro" id="IPR020541">
    <property type="entry name" value="Chorismate_synthase_CS"/>
</dbReference>
<dbReference type="NCBIfam" id="TIGR00033">
    <property type="entry name" value="aroC"/>
    <property type="match status" value="1"/>
</dbReference>
<dbReference type="NCBIfam" id="NF003793">
    <property type="entry name" value="PRK05382.1"/>
    <property type="match status" value="1"/>
</dbReference>
<dbReference type="PANTHER" id="PTHR21085">
    <property type="entry name" value="CHORISMATE SYNTHASE"/>
    <property type="match status" value="1"/>
</dbReference>
<dbReference type="PANTHER" id="PTHR21085:SF0">
    <property type="entry name" value="CHORISMATE SYNTHASE"/>
    <property type="match status" value="1"/>
</dbReference>
<dbReference type="Pfam" id="PF01264">
    <property type="entry name" value="Chorismate_synt"/>
    <property type="match status" value="1"/>
</dbReference>
<dbReference type="PIRSF" id="PIRSF001456">
    <property type="entry name" value="Chorismate_synth"/>
    <property type="match status" value="1"/>
</dbReference>
<dbReference type="SUPFAM" id="SSF103263">
    <property type="entry name" value="Chorismate synthase, AroC"/>
    <property type="match status" value="1"/>
</dbReference>
<dbReference type="PROSITE" id="PS00787">
    <property type="entry name" value="CHORISMATE_SYNTHASE_1"/>
    <property type="match status" value="1"/>
</dbReference>
<dbReference type="PROSITE" id="PS00788">
    <property type="entry name" value="CHORISMATE_SYNTHASE_2"/>
    <property type="match status" value="1"/>
</dbReference>
<dbReference type="PROSITE" id="PS00789">
    <property type="entry name" value="CHORISMATE_SYNTHASE_3"/>
    <property type="match status" value="1"/>
</dbReference>
<protein>
    <recommendedName>
        <fullName evidence="1">Chorismate synthase</fullName>
        <shortName evidence="1">CS</shortName>
        <ecNumber evidence="1">4.2.3.5</ecNumber>
    </recommendedName>
    <alternativeName>
        <fullName evidence="1">5-enolpyruvylshikimate-3-phosphate phospholyase</fullName>
    </alternativeName>
</protein>
<evidence type="ECO:0000255" key="1">
    <source>
        <dbReference type="HAMAP-Rule" id="MF_00300"/>
    </source>
</evidence>
<gene>
    <name evidence="1" type="primary">aroC</name>
    <name type="ordered locus">Abu_1614</name>
</gene>
<reference key="1">
    <citation type="journal article" date="2007" name="PLoS ONE">
        <title>The complete genome sequence and analysis of the Epsilonproteobacterium Arcobacter butzleri.</title>
        <authorList>
            <person name="Miller W.G."/>
            <person name="Parker C.T."/>
            <person name="Rubenfield M."/>
            <person name="Mendz G.L."/>
            <person name="Woesten M.M.S.M."/>
            <person name="Ussery D.W."/>
            <person name="Stolz J.F."/>
            <person name="Binnewies T.T."/>
            <person name="Hallin P.F."/>
            <person name="Wang G."/>
            <person name="Malek J.A."/>
            <person name="Rogosin A."/>
            <person name="Stanker L.H."/>
            <person name="Mandrell R.E."/>
        </authorList>
    </citation>
    <scope>NUCLEOTIDE SEQUENCE [LARGE SCALE GENOMIC DNA]</scope>
    <source>
        <strain>RM4018</strain>
    </source>
</reference>
<accession>A8EV89</accession>
<organism>
    <name type="scientific">Aliarcobacter butzleri (strain RM4018)</name>
    <name type="common">Arcobacter butzleri</name>
    <dbReference type="NCBI Taxonomy" id="367737"/>
    <lineage>
        <taxon>Bacteria</taxon>
        <taxon>Pseudomonadati</taxon>
        <taxon>Campylobacterota</taxon>
        <taxon>Epsilonproteobacteria</taxon>
        <taxon>Campylobacterales</taxon>
        <taxon>Arcobacteraceae</taxon>
        <taxon>Aliarcobacter</taxon>
    </lineage>
</organism>
<sequence>MNTFGHRFRFTTFGESHGKALGCIVDGVPAGIKIDEKFIQSEMDRRKPGQNKFATQRKEGDVVEILSGVFEGMTTGTSISMIIFNENQKSGDYSNIKDLFRPGHADFTYFNKYGIRDYRGGGRSSARETAARVAAGAIAKLLLKELNIDIRSGICEINGIQASNFDFENVKDSEIYALDKSVEEEQKNAILEARNSHNSVGGVALVNVKNCPIGLGEPLYFKLDSQIANAMMSINAVKAVEIGDGILASKVKGYENNDQIRKAGFKTNHTGGILGGISNGDEINVKVYFKATPSIFIEQETIDIYNNEVNCNLKGRHDPCVAVRGSVVAESMMALVLADMVLLNLSSKIENIKKVYEK</sequence>
<feature type="chain" id="PRO_1000059308" description="Chorismate synthase">
    <location>
        <begin position="1"/>
        <end position="358"/>
    </location>
</feature>
<feature type="binding site" evidence="1">
    <location>
        <position position="46"/>
    </location>
    <ligand>
        <name>NADP(+)</name>
        <dbReference type="ChEBI" id="CHEBI:58349"/>
    </ligand>
</feature>
<feature type="binding site" evidence="1">
    <location>
        <begin position="123"/>
        <end position="125"/>
    </location>
    <ligand>
        <name>FMN</name>
        <dbReference type="ChEBI" id="CHEBI:58210"/>
    </ligand>
</feature>
<feature type="binding site" evidence="1">
    <location>
        <begin position="235"/>
        <end position="236"/>
    </location>
    <ligand>
        <name>FMN</name>
        <dbReference type="ChEBI" id="CHEBI:58210"/>
    </ligand>
</feature>
<feature type="binding site" evidence="1">
    <location>
        <position position="275"/>
    </location>
    <ligand>
        <name>FMN</name>
        <dbReference type="ChEBI" id="CHEBI:58210"/>
    </ligand>
</feature>
<feature type="binding site" evidence="1">
    <location>
        <begin position="290"/>
        <end position="294"/>
    </location>
    <ligand>
        <name>FMN</name>
        <dbReference type="ChEBI" id="CHEBI:58210"/>
    </ligand>
</feature>
<feature type="binding site" evidence="1">
    <location>
        <position position="316"/>
    </location>
    <ligand>
        <name>FMN</name>
        <dbReference type="ChEBI" id="CHEBI:58210"/>
    </ligand>
</feature>
<comment type="function">
    <text evidence="1">Catalyzes the anti-1,4-elimination of the C-3 phosphate and the C-6 proR hydrogen from 5-enolpyruvylshikimate-3-phosphate (EPSP) to yield chorismate, which is the branch point compound that serves as the starting substrate for the three terminal pathways of aromatic amino acid biosynthesis. This reaction introduces a second double bond into the aromatic ring system.</text>
</comment>
<comment type="catalytic activity">
    <reaction evidence="1">
        <text>5-O-(1-carboxyvinyl)-3-phosphoshikimate = chorismate + phosphate</text>
        <dbReference type="Rhea" id="RHEA:21020"/>
        <dbReference type="ChEBI" id="CHEBI:29748"/>
        <dbReference type="ChEBI" id="CHEBI:43474"/>
        <dbReference type="ChEBI" id="CHEBI:57701"/>
        <dbReference type="EC" id="4.2.3.5"/>
    </reaction>
</comment>
<comment type="cofactor">
    <cofactor evidence="1">
        <name>FMNH2</name>
        <dbReference type="ChEBI" id="CHEBI:57618"/>
    </cofactor>
    <text evidence="1">Reduced FMN (FMNH(2)).</text>
</comment>
<comment type="pathway">
    <text evidence="1">Metabolic intermediate biosynthesis; chorismate biosynthesis; chorismate from D-erythrose 4-phosphate and phosphoenolpyruvate: step 7/7.</text>
</comment>
<comment type="subunit">
    <text evidence="1">Homotetramer.</text>
</comment>
<comment type="similarity">
    <text evidence="1">Belongs to the chorismate synthase family.</text>
</comment>
<name>AROC_ALIB4</name>
<proteinExistence type="inferred from homology"/>
<keyword id="KW-0028">Amino-acid biosynthesis</keyword>
<keyword id="KW-0057">Aromatic amino acid biosynthesis</keyword>
<keyword id="KW-0274">FAD</keyword>
<keyword id="KW-0285">Flavoprotein</keyword>
<keyword id="KW-0288">FMN</keyword>
<keyword id="KW-0456">Lyase</keyword>
<keyword id="KW-0521">NADP</keyword>
<keyword id="KW-1185">Reference proteome</keyword>